<feature type="chain" id="PRO_1000092647" description="Ribosomal RNA small subunit methyltransferase G">
    <location>
        <begin position="1"/>
        <end position="207"/>
    </location>
</feature>
<feature type="binding site" evidence="1">
    <location>
        <position position="73"/>
    </location>
    <ligand>
        <name>S-adenosyl-L-methionine</name>
        <dbReference type="ChEBI" id="CHEBI:59789"/>
    </ligand>
</feature>
<feature type="binding site" evidence="1">
    <location>
        <position position="78"/>
    </location>
    <ligand>
        <name>S-adenosyl-L-methionine</name>
        <dbReference type="ChEBI" id="CHEBI:59789"/>
    </ligand>
</feature>
<feature type="binding site" evidence="1">
    <location>
        <begin position="124"/>
        <end position="125"/>
    </location>
    <ligand>
        <name>S-adenosyl-L-methionine</name>
        <dbReference type="ChEBI" id="CHEBI:59789"/>
    </ligand>
</feature>
<feature type="binding site" evidence="1">
    <location>
        <position position="139"/>
    </location>
    <ligand>
        <name>S-adenosyl-L-methionine</name>
        <dbReference type="ChEBI" id="CHEBI:59789"/>
    </ligand>
</feature>
<gene>
    <name evidence="1" type="primary">rsmG</name>
    <name type="ordered locus">SeAg_B4100</name>
</gene>
<protein>
    <recommendedName>
        <fullName evidence="1">Ribosomal RNA small subunit methyltransferase G</fullName>
        <ecNumber evidence="1">2.1.1.170</ecNumber>
    </recommendedName>
    <alternativeName>
        <fullName evidence="1">16S rRNA 7-methylguanosine methyltransferase</fullName>
        <shortName evidence="1">16S rRNA m7G methyltransferase</shortName>
    </alternativeName>
</protein>
<reference key="1">
    <citation type="journal article" date="2011" name="J. Bacteriol.">
        <title>Comparative genomics of 28 Salmonella enterica isolates: evidence for CRISPR-mediated adaptive sublineage evolution.</title>
        <authorList>
            <person name="Fricke W.F."/>
            <person name="Mammel M.K."/>
            <person name="McDermott P.F."/>
            <person name="Tartera C."/>
            <person name="White D.G."/>
            <person name="Leclerc J.E."/>
            <person name="Ravel J."/>
            <person name="Cebula T.A."/>
        </authorList>
    </citation>
    <scope>NUCLEOTIDE SEQUENCE [LARGE SCALE GENOMIC DNA]</scope>
    <source>
        <strain>SL483</strain>
    </source>
</reference>
<name>RSMG_SALA4</name>
<sequence length="207" mass="23147">MLNKLSRLLADAGISLTDHQKTLLAAYVDMLHKWNKAYNLTSVRDPNEMLVRHILDSIVVAPYLQGQRFIDVGTGPGLPGIPLAIVLPDAHFTLLDSLGKRVRFLRQVQHELKLENITPVQSRVEAYPSEPPFDGVISRAFASLNDMVSWCHHLPGEKGRFYALKGQLPGDEIASLPDNFSVESVEKLRVPQLEGERHLVIIKSNKV</sequence>
<organism>
    <name type="scientific">Salmonella agona (strain SL483)</name>
    <dbReference type="NCBI Taxonomy" id="454166"/>
    <lineage>
        <taxon>Bacteria</taxon>
        <taxon>Pseudomonadati</taxon>
        <taxon>Pseudomonadota</taxon>
        <taxon>Gammaproteobacteria</taxon>
        <taxon>Enterobacterales</taxon>
        <taxon>Enterobacteriaceae</taxon>
        <taxon>Salmonella</taxon>
    </lineage>
</organism>
<accession>B5EZ06</accession>
<keyword id="KW-0963">Cytoplasm</keyword>
<keyword id="KW-0489">Methyltransferase</keyword>
<keyword id="KW-0698">rRNA processing</keyword>
<keyword id="KW-0949">S-adenosyl-L-methionine</keyword>
<keyword id="KW-0808">Transferase</keyword>
<dbReference type="EC" id="2.1.1.170" evidence="1"/>
<dbReference type="EMBL" id="CP001138">
    <property type="protein sequence ID" value="ACH50583.1"/>
    <property type="molecule type" value="Genomic_DNA"/>
</dbReference>
<dbReference type="RefSeq" id="WP_001747548.1">
    <property type="nucleotide sequence ID" value="NC_011149.1"/>
</dbReference>
<dbReference type="SMR" id="B5EZ06"/>
<dbReference type="KEGG" id="sea:SeAg_B4100"/>
<dbReference type="HOGENOM" id="CLU_065341_2_2_6"/>
<dbReference type="Proteomes" id="UP000008819">
    <property type="component" value="Chromosome"/>
</dbReference>
<dbReference type="GO" id="GO:0005829">
    <property type="term" value="C:cytosol"/>
    <property type="evidence" value="ECO:0007669"/>
    <property type="project" value="TreeGrafter"/>
</dbReference>
<dbReference type="GO" id="GO:0070043">
    <property type="term" value="F:rRNA (guanine-N7-)-methyltransferase activity"/>
    <property type="evidence" value="ECO:0007669"/>
    <property type="project" value="UniProtKB-UniRule"/>
</dbReference>
<dbReference type="CDD" id="cd02440">
    <property type="entry name" value="AdoMet_MTases"/>
    <property type="match status" value="1"/>
</dbReference>
<dbReference type="FunFam" id="3.40.50.150:FF:000032">
    <property type="entry name" value="Ribosomal RNA small subunit methyltransferase G"/>
    <property type="match status" value="1"/>
</dbReference>
<dbReference type="Gene3D" id="3.40.50.150">
    <property type="entry name" value="Vaccinia Virus protein VP39"/>
    <property type="match status" value="1"/>
</dbReference>
<dbReference type="HAMAP" id="MF_00074">
    <property type="entry name" value="16SrRNA_methyltr_G"/>
    <property type="match status" value="1"/>
</dbReference>
<dbReference type="InterPro" id="IPR003682">
    <property type="entry name" value="rRNA_ssu_MeTfrase_G"/>
</dbReference>
<dbReference type="InterPro" id="IPR029063">
    <property type="entry name" value="SAM-dependent_MTases_sf"/>
</dbReference>
<dbReference type="NCBIfam" id="TIGR00138">
    <property type="entry name" value="rsmG_gidB"/>
    <property type="match status" value="1"/>
</dbReference>
<dbReference type="PANTHER" id="PTHR31760">
    <property type="entry name" value="S-ADENOSYL-L-METHIONINE-DEPENDENT METHYLTRANSFERASES SUPERFAMILY PROTEIN"/>
    <property type="match status" value="1"/>
</dbReference>
<dbReference type="PANTHER" id="PTHR31760:SF0">
    <property type="entry name" value="S-ADENOSYL-L-METHIONINE-DEPENDENT METHYLTRANSFERASES SUPERFAMILY PROTEIN"/>
    <property type="match status" value="1"/>
</dbReference>
<dbReference type="Pfam" id="PF02527">
    <property type="entry name" value="GidB"/>
    <property type="match status" value="1"/>
</dbReference>
<dbReference type="PIRSF" id="PIRSF003078">
    <property type="entry name" value="GidB"/>
    <property type="match status" value="1"/>
</dbReference>
<dbReference type="SUPFAM" id="SSF53335">
    <property type="entry name" value="S-adenosyl-L-methionine-dependent methyltransferases"/>
    <property type="match status" value="1"/>
</dbReference>
<proteinExistence type="inferred from homology"/>
<comment type="function">
    <text evidence="1">Specifically methylates the N7 position of guanine in position 527 of 16S rRNA.</text>
</comment>
<comment type="catalytic activity">
    <reaction evidence="1">
        <text>guanosine(527) in 16S rRNA + S-adenosyl-L-methionine = N(7)-methylguanosine(527) in 16S rRNA + S-adenosyl-L-homocysteine</text>
        <dbReference type="Rhea" id="RHEA:42732"/>
        <dbReference type="Rhea" id="RHEA-COMP:10209"/>
        <dbReference type="Rhea" id="RHEA-COMP:10210"/>
        <dbReference type="ChEBI" id="CHEBI:57856"/>
        <dbReference type="ChEBI" id="CHEBI:59789"/>
        <dbReference type="ChEBI" id="CHEBI:74269"/>
        <dbReference type="ChEBI" id="CHEBI:74480"/>
        <dbReference type="EC" id="2.1.1.170"/>
    </reaction>
</comment>
<comment type="subcellular location">
    <subcellularLocation>
        <location evidence="1">Cytoplasm</location>
    </subcellularLocation>
</comment>
<comment type="similarity">
    <text evidence="1">Belongs to the methyltransferase superfamily. RNA methyltransferase RsmG family.</text>
</comment>
<evidence type="ECO:0000255" key="1">
    <source>
        <dbReference type="HAMAP-Rule" id="MF_00074"/>
    </source>
</evidence>